<sequence>MALNLEKKQEIIKAFATKENDTGSCEVQVALLNERIKLLTEHLKANPKDHSSRLGLLKLVAQRRNLLKYIKRTAHARYVVLIEKLGIKDR</sequence>
<accession>B5Z6F4</accession>
<gene>
    <name evidence="1" type="primary">rpsO</name>
    <name type="ordered locus">HPG27_388</name>
</gene>
<name>RS15_HELPG</name>
<protein>
    <recommendedName>
        <fullName evidence="1">Small ribosomal subunit protein uS15</fullName>
    </recommendedName>
    <alternativeName>
        <fullName evidence="2">30S ribosomal protein S15</fullName>
    </alternativeName>
</protein>
<organism>
    <name type="scientific">Helicobacter pylori (strain G27)</name>
    <dbReference type="NCBI Taxonomy" id="563041"/>
    <lineage>
        <taxon>Bacteria</taxon>
        <taxon>Pseudomonadati</taxon>
        <taxon>Campylobacterota</taxon>
        <taxon>Epsilonproteobacteria</taxon>
        <taxon>Campylobacterales</taxon>
        <taxon>Helicobacteraceae</taxon>
        <taxon>Helicobacter</taxon>
    </lineage>
</organism>
<evidence type="ECO:0000255" key="1">
    <source>
        <dbReference type="HAMAP-Rule" id="MF_01343"/>
    </source>
</evidence>
<evidence type="ECO:0000305" key="2"/>
<reference key="1">
    <citation type="journal article" date="2009" name="J. Bacteriol.">
        <title>The complete genome sequence of Helicobacter pylori strain G27.</title>
        <authorList>
            <person name="Baltrus D.A."/>
            <person name="Amieva M.R."/>
            <person name="Covacci A."/>
            <person name="Lowe T.M."/>
            <person name="Merrell D.S."/>
            <person name="Ottemann K.M."/>
            <person name="Stein M."/>
            <person name="Salama N.R."/>
            <person name="Guillemin K."/>
        </authorList>
    </citation>
    <scope>NUCLEOTIDE SEQUENCE [LARGE SCALE GENOMIC DNA]</scope>
    <source>
        <strain>G27</strain>
    </source>
</reference>
<keyword id="KW-1185">Reference proteome</keyword>
<keyword id="KW-0687">Ribonucleoprotein</keyword>
<keyword id="KW-0689">Ribosomal protein</keyword>
<keyword id="KW-0694">RNA-binding</keyword>
<keyword id="KW-0699">rRNA-binding</keyword>
<comment type="function">
    <text evidence="1">One of the primary rRNA binding proteins, it binds directly to 16S rRNA where it helps nucleate assembly of the platform of the 30S subunit by binding and bridging several RNA helices of the 16S rRNA.</text>
</comment>
<comment type="function">
    <text evidence="1">Forms an intersubunit bridge (bridge B4) with the 23S rRNA of the 50S subunit in the ribosome.</text>
</comment>
<comment type="subunit">
    <text evidence="1">Part of the 30S ribosomal subunit. Forms a bridge to the 50S subunit in the 70S ribosome, contacting the 23S rRNA.</text>
</comment>
<comment type="similarity">
    <text evidence="1">Belongs to the universal ribosomal protein uS15 family.</text>
</comment>
<dbReference type="EMBL" id="CP001173">
    <property type="protein sequence ID" value="ACI27153.1"/>
    <property type="molecule type" value="Genomic_DNA"/>
</dbReference>
<dbReference type="RefSeq" id="WP_001207115.1">
    <property type="nucleotide sequence ID" value="NC_011333.1"/>
</dbReference>
<dbReference type="SMR" id="B5Z6F4"/>
<dbReference type="KEGG" id="hpg:HPG27_388"/>
<dbReference type="HOGENOM" id="CLU_148518_0_0_7"/>
<dbReference type="Proteomes" id="UP000001735">
    <property type="component" value="Chromosome"/>
</dbReference>
<dbReference type="GO" id="GO:0022627">
    <property type="term" value="C:cytosolic small ribosomal subunit"/>
    <property type="evidence" value="ECO:0007669"/>
    <property type="project" value="TreeGrafter"/>
</dbReference>
<dbReference type="GO" id="GO:0019843">
    <property type="term" value="F:rRNA binding"/>
    <property type="evidence" value="ECO:0007669"/>
    <property type="project" value="UniProtKB-UniRule"/>
</dbReference>
<dbReference type="GO" id="GO:0003735">
    <property type="term" value="F:structural constituent of ribosome"/>
    <property type="evidence" value="ECO:0007669"/>
    <property type="project" value="InterPro"/>
</dbReference>
<dbReference type="GO" id="GO:0006412">
    <property type="term" value="P:translation"/>
    <property type="evidence" value="ECO:0007669"/>
    <property type="project" value="UniProtKB-UniRule"/>
</dbReference>
<dbReference type="CDD" id="cd00353">
    <property type="entry name" value="Ribosomal_S15p_S13e"/>
    <property type="match status" value="1"/>
</dbReference>
<dbReference type="FunFam" id="1.10.287.10:FF:000002">
    <property type="entry name" value="30S ribosomal protein S15"/>
    <property type="match status" value="1"/>
</dbReference>
<dbReference type="Gene3D" id="6.10.250.3130">
    <property type="match status" value="1"/>
</dbReference>
<dbReference type="Gene3D" id="1.10.287.10">
    <property type="entry name" value="S15/NS1, RNA-binding"/>
    <property type="match status" value="1"/>
</dbReference>
<dbReference type="HAMAP" id="MF_01343_B">
    <property type="entry name" value="Ribosomal_uS15_B"/>
    <property type="match status" value="1"/>
</dbReference>
<dbReference type="InterPro" id="IPR000589">
    <property type="entry name" value="Ribosomal_uS15"/>
</dbReference>
<dbReference type="InterPro" id="IPR005290">
    <property type="entry name" value="Ribosomal_uS15_bac-type"/>
</dbReference>
<dbReference type="InterPro" id="IPR009068">
    <property type="entry name" value="uS15_NS1_RNA-bd_sf"/>
</dbReference>
<dbReference type="NCBIfam" id="TIGR00952">
    <property type="entry name" value="S15_bact"/>
    <property type="match status" value="1"/>
</dbReference>
<dbReference type="PANTHER" id="PTHR23321">
    <property type="entry name" value="RIBOSOMAL PROTEIN S15, BACTERIAL AND ORGANELLAR"/>
    <property type="match status" value="1"/>
</dbReference>
<dbReference type="PANTHER" id="PTHR23321:SF26">
    <property type="entry name" value="SMALL RIBOSOMAL SUBUNIT PROTEIN US15M"/>
    <property type="match status" value="1"/>
</dbReference>
<dbReference type="Pfam" id="PF00312">
    <property type="entry name" value="Ribosomal_S15"/>
    <property type="match status" value="1"/>
</dbReference>
<dbReference type="SMART" id="SM01387">
    <property type="entry name" value="Ribosomal_S15"/>
    <property type="match status" value="1"/>
</dbReference>
<dbReference type="SUPFAM" id="SSF47060">
    <property type="entry name" value="S15/NS1 RNA-binding domain"/>
    <property type="match status" value="1"/>
</dbReference>
<dbReference type="PROSITE" id="PS00362">
    <property type="entry name" value="RIBOSOMAL_S15"/>
    <property type="match status" value="1"/>
</dbReference>
<proteinExistence type="inferred from homology"/>
<feature type="chain" id="PRO_1000143125" description="Small ribosomal subunit protein uS15">
    <location>
        <begin position="1"/>
        <end position="90"/>
    </location>
</feature>